<keyword id="KW-0143">Chaperone</keyword>
<keyword id="KW-0963">Cytoplasm</keyword>
<keyword id="KW-0346">Stress response</keyword>
<feature type="chain" id="PRO_1000053636" description="Protein GrpE">
    <location>
        <begin position="1"/>
        <end position="196"/>
    </location>
</feature>
<feature type="region of interest" description="Disordered" evidence="2">
    <location>
        <begin position="1"/>
        <end position="40"/>
    </location>
</feature>
<name>GRPE_SALPA</name>
<accession>Q5PFG9</accession>
<evidence type="ECO:0000255" key="1">
    <source>
        <dbReference type="HAMAP-Rule" id="MF_01151"/>
    </source>
</evidence>
<evidence type="ECO:0000256" key="2">
    <source>
        <dbReference type="SAM" id="MobiDB-lite"/>
    </source>
</evidence>
<comment type="function">
    <text evidence="1">Participates actively in the response to hyperosmotic and heat shock by preventing the aggregation of stress-denatured proteins, in association with DnaK and GrpE. It is the nucleotide exchange factor for DnaK and may function as a thermosensor. Unfolded proteins bind initially to DnaJ; upon interaction with the DnaJ-bound protein, DnaK hydrolyzes its bound ATP, resulting in the formation of a stable complex. GrpE releases ADP from DnaK; ATP binding to DnaK triggers the release of the substrate protein, thus completing the reaction cycle. Several rounds of ATP-dependent interactions between DnaJ, DnaK and GrpE are required for fully efficient folding.</text>
</comment>
<comment type="subunit">
    <text evidence="1">Homodimer.</text>
</comment>
<comment type="subcellular location">
    <subcellularLocation>
        <location evidence="1">Cytoplasm</location>
    </subcellularLocation>
</comment>
<comment type="similarity">
    <text evidence="1">Belongs to the GrpE family.</text>
</comment>
<gene>
    <name evidence="1" type="primary">grpE</name>
    <name type="ordered locus">SPA2540</name>
</gene>
<reference key="1">
    <citation type="journal article" date="2004" name="Nat. Genet.">
        <title>Comparison of genome degradation in Paratyphi A and Typhi, human-restricted serovars of Salmonella enterica that cause typhoid.</title>
        <authorList>
            <person name="McClelland M."/>
            <person name="Sanderson K.E."/>
            <person name="Clifton S.W."/>
            <person name="Latreille P."/>
            <person name="Porwollik S."/>
            <person name="Sabo A."/>
            <person name="Meyer R."/>
            <person name="Bieri T."/>
            <person name="Ozersky P."/>
            <person name="McLellan M."/>
            <person name="Harkins C.R."/>
            <person name="Wang C."/>
            <person name="Nguyen C."/>
            <person name="Berghoff A."/>
            <person name="Elliott G."/>
            <person name="Kohlberg S."/>
            <person name="Strong C."/>
            <person name="Du F."/>
            <person name="Carter J."/>
            <person name="Kremizki C."/>
            <person name="Layman D."/>
            <person name="Leonard S."/>
            <person name="Sun H."/>
            <person name="Fulton L."/>
            <person name="Nash W."/>
            <person name="Miner T."/>
            <person name="Minx P."/>
            <person name="Delehaunty K."/>
            <person name="Fronick C."/>
            <person name="Magrini V."/>
            <person name="Nhan M."/>
            <person name="Warren W."/>
            <person name="Florea L."/>
            <person name="Spieth J."/>
            <person name="Wilson R.K."/>
        </authorList>
    </citation>
    <scope>NUCLEOTIDE SEQUENCE [LARGE SCALE GENOMIC DNA]</scope>
    <source>
        <strain>ATCC 9150 / SARB42</strain>
    </source>
</reference>
<protein>
    <recommendedName>
        <fullName evidence="1">Protein GrpE</fullName>
    </recommendedName>
    <alternativeName>
        <fullName evidence="1">HSP-70 cofactor</fullName>
    </alternativeName>
</protein>
<dbReference type="EMBL" id="CP000026">
    <property type="protein sequence ID" value="AAV78409.1"/>
    <property type="molecule type" value="Genomic_DNA"/>
</dbReference>
<dbReference type="RefSeq" id="WP_001518875.1">
    <property type="nucleotide sequence ID" value="NC_006511.1"/>
</dbReference>
<dbReference type="SMR" id="Q5PFG9"/>
<dbReference type="KEGG" id="spt:SPA2540"/>
<dbReference type="HOGENOM" id="CLU_057217_6_0_6"/>
<dbReference type="Proteomes" id="UP000008185">
    <property type="component" value="Chromosome"/>
</dbReference>
<dbReference type="GO" id="GO:0005829">
    <property type="term" value="C:cytosol"/>
    <property type="evidence" value="ECO:0007669"/>
    <property type="project" value="TreeGrafter"/>
</dbReference>
<dbReference type="GO" id="GO:0000774">
    <property type="term" value="F:adenyl-nucleotide exchange factor activity"/>
    <property type="evidence" value="ECO:0007669"/>
    <property type="project" value="InterPro"/>
</dbReference>
<dbReference type="GO" id="GO:0042803">
    <property type="term" value="F:protein homodimerization activity"/>
    <property type="evidence" value="ECO:0007669"/>
    <property type="project" value="InterPro"/>
</dbReference>
<dbReference type="GO" id="GO:0051087">
    <property type="term" value="F:protein-folding chaperone binding"/>
    <property type="evidence" value="ECO:0007669"/>
    <property type="project" value="InterPro"/>
</dbReference>
<dbReference type="GO" id="GO:0051082">
    <property type="term" value="F:unfolded protein binding"/>
    <property type="evidence" value="ECO:0007669"/>
    <property type="project" value="TreeGrafter"/>
</dbReference>
<dbReference type="GO" id="GO:0006457">
    <property type="term" value="P:protein folding"/>
    <property type="evidence" value="ECO:0007669"/>
    <property type="project" value="InterPro"/>
</dbReference>
<dbReference type="CDD" id="cd00446">
    <property type="entry name" value="GrpE"/>
    <property type="match status" value="1"/>
</dbReference>
<dbReference type="FunFam" id="2.30.22.10:FF:000001">
    <property type="entry name" value="Protein GrpE"/>
    <property type="match status" value="1"/>
</dbReference>
<dbReference type="FunFam" id="3.90.20.20:FF:000001">
    <property type="entry name" value="Protein GrpE"/>
    <property type="match status" value="1"/>
</dbReference>
<dbReference type="Gene3D" id="3.90.20.20">
    <property type="match status" value="1"/>
</dbReference>
<dbReference type="Gene3D" id="2.30.22.10">
    <property type="entry name" value="Head domain of nucleotide exchange factor GrpE"/>
    <property type="match status" value="1"/>
</dbReference>
<dbReference type="HAMAP" id="MF_01151">
    <property type="entry name" value="GrpE"/>
    <property type="match status" value="1"/>
</dbReference>
<dbReference type="InterPro" id="IPR000740">
    <property type="entry name" value="GrpE"/>
</dbReference>
<dbReference type="InterPro" id="IPR013805">
    <property type="entry name" value="GrpE_coiled_coil"/>
</dbReference>
<dbReference type="InterPro" id="IPR009012">
    <property type="entry name" value="GrpE_head"/>
</dbReference>
<dbReference type="NCBIfam" id="NF007655">
    <property type="entry name" value="PRK10325.1"/>
    <property type="match status" value="1"/>
</dbReference>
<dbReference type="NCBIfam" id="NF010738">
    <property type="entry name" value="PRK14140.1"/>
    <property type="match status" value="1"/>
</dbReference>
<dbReference type="NCBIfam" id="NF010748">
    <property type="entry name" value="PRK14150.1"/>
    <property type="match status" value="1"/>
</dbReference>
<dbReference type="PANTHER" id="PTHR21237">
    <property type="entry name" value="GRPE PROTEIN"/>
    <property type="match status" value="1"/>
</dbReference>
<dbReference type="PANTHER" id="PTHR21237:SF23">
    <property type="entry name" value="GRPE PROTEIN HOMOLOG, MITOCHONDRIAL"/>
    <property type="match status" value="1"/>
</dbReference>
<dbReference type="Pfam" id="PF01025">
    <property type="entry name" value="GrpE"/>
    <property type="match status" value="1"/>
</dbReference>
<dbReference type="PRINTS" id="PR00773">
    <property type="entry name" value="GRPEPROTEIN"/>
</dbReference>
<dbReference type="SUPFAM" id="SSF58014">
    <property type="entry name" value="Coiled-coil domain of nucleotide exchange factor GrpE"/>
    <property type="match status" value="1"/>
</dbReference>
<dbReference type="SUPFAM" id="SSF51064">
    <property type="entry name" value="Head domain of nucleotide exchange factor GrpE"/>
    <property type="match status" value="1"/>
</dbReference>
<dbReference type="PROSITE" id="PS01071">
    <property type="entry name" value="GRPE"/>
    <property type="match status" value="1"/>
</dbReference>
<sequence length="196" mass="21841">MSSKEQKTPEGQAPEEIIMDQHEEVEAVEPNDSAEQVDPRDEKIANLEVQLAEAQTRERDTVLRIKAEMENLRRRTEQDIEKAHKFALEKFVNELLPVIDSLDRALEVADKANPDMAAMVEGIELTLKSMLDVVRKFGVEVIAETNVPLDPNVHQAIAMVESEEVPAGNVLGIMQKGYTLNGRTIRAAMVTVAKAK</sequence>
<proteinExistence type="inferred from homology"/>
<organism>
    <name type="scientific">Salmonella paratyphi A (strain ATCC 9150 / SARB42)</name>
    <dbReference type="NCBI Taxonomy" id="295319"/>
    <lineage>
        <taxon>Bacteria</taxon>
        <taxon>Pseudomonadati</taxon>
        <taxon>Pseudomonadota</taxon>
        <taxon>Gammaproteobacteria</taxon>
        <taxon>Enterobacterales</taxon>
        <taxon>Enterobacteriaceae</taxon>
        <taxon>Salmonella</taxon>
    </lineage>
</organism>